<name>ATG3_PYRO7</name>
<feature type="chain" id="PRO_0000213582" description="Autophagy-related protein 3">
    <location>
        <begin position="1"/>
        <end position="350"/>
    </location>
</feature>
<feature type="region of interest" description="Flexible region" evidence="1">
    <location>
        <begin position="85"/>
        <end position="166"/>
    </location>
</feature>
<feature type="region of interest" description="Disordered" evidence="2">
    <location>
        <begin position="97"/>
        <end position="171"/>
    </location>
</feature>
<feature type="region of interest" description="Handle region" evidence="1">
    <location>
        <begin position="248"/>
        <end position="326"/>
    </location>
</feature>
<feature type="compositionally biased region" description="Basic and acidic residues" evidence="2">
    <location>
        <begin position="102"/>
        <end position="113"/>
    </location>
</feature>
<feature type="compositionally biased region" description="Acidic residues" evidence="2">
    <location>
        <begin position="146"/>
        <end position="161"/>
    </location>
</feature>
<feature type="active site" description="Glycyl thioester intermediate" evidence="1">
    <location>
        <position position="244"/>
    </location>
</feature>
<feature type="modified residue" description="N6-acetyllysine" evidence="3">
    <location>
        <position position="262"/>
    </location>
</feature>
<feature type="modified residue" description="N6-acetyllysine" evidence="3">
    <location>
        <position position="267"/>
    </location>
</feature>
<feature type="mutagenesis site" description="Weakens acetylation levels of ATG3; when associated with R-267." evidence="3">
    <original>K</original>
    <variation>R</variation>
    <location>
        <position position="262"/>
    </location>
</feature>
<feature type="mutagenesis site" description="Weakens acetylation levels of ATG3; when associated with R-262." evidence="3">
    <original>K</original>
    <variation>R</variation>
    <location>
        <position position="267"/>
    </location>
</feature>
<protein>
    <recommendedName>
        <fullName evidence="4">Autophagy-related protein 3</fullName>
    </recommendedName>
    <alternativeName>
        <fullName evidence="4">Autophagy-related E2-like conjugation enzyme ATG3</fullName>
    </alternativeName>
</protein>
<keyword id="KW-0007">Acetylation</keyword>
<keyword id="KW-0072">Autophagy</keyword>
<keyword id="KW-0963">Cytoplasm</keyword>
<keyword id="KW-0309">Germination</keyword>
<keyword id="KW-0653">Protein transport</keyword>
<keyword id="KW-1185">Reference proteome</keyword>
<keyword id="KW-0346">Stress response</keyword>
<keyword id="KW-0813">Transport</keyword>
<keyword id="KW-0833">Ubl conjugation pathway</keyword>
<keyword id="KW-0843">Virulence</keyword>
<dbReference type="EMBL" id="CM000230">
    <property type="protein sequence ID" value="EAQ71326.1"/>
    <property type="molecule type" value="Genomic_DNA"/>
</dbReference>
<dbReference type="EMBL" id="CM001237">
    <property type="protein sequence ID" value="EHA46004.1"/>
    <property type="molecule type" value="Genomic_DNA"/>
</dbReference>
<dbReference type="RefSeq" id="XP_003720747.1">
    <property type="nucleotide sequence ID" value="XM_003720699.1"/>
</dbReference>
<dbReference type="SMR" id="Q51LD2"/>
<dbReference type="FunCoup" id="Q51LD2">
    <property type="interactions" value="1089"/>
</dbReference>
<dbReference type="STRING" id="242507.Q51LD2"/>
<dbReference type="iPTMnet" id="Q51LD2"/>
<dbReference type="EnsemblFungi" id="MGG_17909T0">
    <property type="protein sequence ID" value="MGG_17909T0"/>
    <property type="gene ID" value="MGG_17909"/>
</dbReference>
<dbReference type="KEGG" id="mgr:MGG_17909"/>
<dbReference type="VEuPathDB" id="FungiDB:MGG_17909"/>
<dbReference type="eggNOG" id="KOG2981">
    <property type="taxonomic scope" value="Eukaryota"/>
</dbReference>
<dbReference type="HOGENOM" id="CLU_027518_2_0_1"/>
<dbReference type="InParanoid" id="Q51LD2"/>
<dbReference type="OMA" id="HCPTWSW"/>
<dbReference type="OrthoDB" id="1584384at2759"/>
<dbReference type="PHI-base" id="PHI:11530"/>
<dbReference type="PHI-base" id="PHI:2071"/>
<dbReference type="Proteomes" id="UP000009058">
    <property type="component" value="Chromosome 7"/>
</dbReference>
<dbReference type="GO" id="GO:0005829">
    <property type="term" value="C:cytosol"/>
    <property type="evidence" value="ECO:0007669"/>
    <property type="project" value="EnsemblFungi"/>
</dbReference>
<dbReference type="GO" id="GO:0005739">
    <property type="term" value="C:mitochondrion"/>
    <property type="evidence" value="ECO:0007669"/>
    <property type="project" value="EnsemblFungi"/>
</dbReference>
<dbReference type="GO" id="GO:0061908">
    <property type="term" value="C:phagophore"/>
    <property type="evidence" value="ECO:0007669"/>
    <property type="project" value="EnsemblFungi"/>
</dbReference>
<dbReference type="GO" id="GO:0000407">
    <property type="term" value="C:phagophore assembly site"/>
    <property type="evidence" value="ECO:0007669"/>
    <property type="project" value="UniProtKB-SubCell"/>
</dbReference>
<dbReference type="GO" id="GO:0019776">
    <property type="term" value="F:Atg8-family ligase activity"/>
    <property type="evidence" value="ECO:0007669"/>
    <property type="project" value="EnsemblFungi"/>
</dbReference>
<dbReference type="GO" id="GO:0000045">
    <property type="term" value="P:autophagosome assembly"/>
    <property type="evidence" value="ECO:0007669"/>
    <property type="project" value="EnsemblFungi"/>
</dbReference>
<dbReference type="GO" id="GO:0000422">
    <property type="term" value="P:autophagy of mitochondrion"/>
    <property type="evidence" value="ECO:0007669"/>
    <property type="project" value="EnsemblFungi"/>
</dbReference>
<dbReference type="GO" id="GO:0061723">
    <property type="term" value="P:glycophagy"/>
    <property type="evidence" value="ECO:0007669"/>
    <property type="project" value="TreeGrafter"/>
</dbReference>
<dbReference type="GO" id="GO:0034727">
    <property type="term" value="P:piecemeal microautophagy of the nucleus"/>
    <property type="evidence" value="ECO:0007669"/>
    <property type="project" value="EnsemblFungi"/>
</dbReference>
<dbReference type="GO" id="GO:0006612">
    <property type="term" value="P:protein targeting to membrane"/>
    <property type="evidence" value="ECO:0007669"/>
    <property type="project" value="EnsemblFungi"/>
</dbReference>
<dbReference type="GO" id="GO:0015031">
    <property type="term" value="P:protein transport"/>
    <property type="evidence" value="ECO:0007669"/>
    <property type="project" value="UniProtKB-KW"/>
</dbReference>
<dbReference type="InterPro" id="IPR007135">
    <property type="entry name" value="Atg3/Atg10"/>
</dbReference>
<dbReference type="PANTHER" id="PTHR12866">
    <property type="entry name" value="UBIQUITIN-LIKE-CONJUGATING ENZYME ATG3"/>
    <property type="match status" value="1"/>
</dbReference>
<dbReference type="PANTHER" id="PTHR12866:SF2">
    <property type="entry name" value="UBIQUITIN-LIKE-CONJUGATING ENZYME ATG3"/>
    <property type="match status" value="1"/>
</dbReference>
<dbReference type="Pfam" id="PF03987">
    <property type="entry name" value="Autophagy_act_C"/>
    <property type="match status" value="1"/>
</dbReference>
<accession>Q51LD2</accession>
<accession>A4RBA2</accession>
<accession>G4NLC0</accession>
<accession>Q2KFF3</accession>
<organism>
    <name type="scientific">Pyricularia oryzae (strain 70-15 / ATCC MYA-4617 / FGSC 8958)</name>
    <name type="common">Rice blast fungus</name>
    <name type="synonym">Magnaporthe oryzae</name>
    <dbReference type="NCBI Taxonomy" id="242507"/>
    <lineage>
        <taxon>Eukaryota</taxon>
        <taxon>Fungi</taxon>
        <taxon>Dikarya</taxon>
        <taxon>Ascomycota</taxon>
        <taxon>Pezizomycotina</taxon>
        <taxon>Sordariomycetes</taxon>
        <taxon>Sordariomycetidae</taxon>
        <taxon>Magnaporthales</taxon>
        <taxon>Pyriculariaceae</taxon>
        <taxon>Pyricularia</taxon>
    </lineage>
</organism>
<gene>
    <name evidence="4" type="primary">ATG3</name>
    <name type="ORF">MGCH7_ch7g733</name>
    <name type="ORF">MGG_02959</name>
</gene>
<evidence type="ECO:0000250" key="1">
    <source>
        <dbReference type="UniProtKB" id="P40344"/>
    </source>
</evidence>
<evidence type="ECO:0000256" key="2">
    <source>
        <dbReference type="SAM" id="MobiDB-lite"/>
    </source>
</evidence>
<evidence type="ECO:0000269" key="3">
    <source>
    </source>
</evidence>
<evidence type="ECO:0000303" key="4">
    <source>
    </source>
</evidence>
<evidence type="ECO:0000305" key="5"/>
<proteinExistence type="evidence at protein level"/>
<sequence length="350" mass="38938">MNSLYSVVNTLRDRYAPVSHTSTFRQTGEITPEEFVAAGDYLVFKFPTWSWGDADSESRRASHLPPGKQFLVTRNVPCNRRLNENFAGDAGLEEAVVDDGDEFKGSKGDDDGWLRTGGLSSSQPLKAREVRTVDDAGNAGERAQPDDDDDIPDMEDEEDDEAIIRDTDASGQTSSRRTYTLYIMYSPYYRTPRLYLSGYGANGQPLPPHNMMEDIMGDYKDKTVTLEDFPFFANNIKMASVHPCKHAPVMKTLLDRADAALKLRREKLKTGDASGQQAGLEGLADEFNKLGVSGKGDASKIDKNDEWEDIQHDDVADQEVAIRVDQYLVVFLKFIASVTPGIEHDFTMGV</sequence>
<comment type="function">
    <text evidence="1 3">E2 conjugating enzyme required for the cytoplasm to vacuole transport (Cvt) and autophagy. Required for selective autophagic degradation of the nucleus (nucleophagy) as well as for mitophagy which contributes to regulate mitochondrial quantity and quality by eliminating the mitochondria to a basal level to fulfill cellular energy requirements and preventing excess ROS production. Responsible for the E2-like covalent binding of phosphatidylethanolamine to the C-terminal Gly of ATG8. The ATG12-ATG5 conjugate plays a role of an E3 and promotes the transfer of ATG8 from ATG3 to phosphatidylethanolamine (PE). This step is required for the membrane association of ATG8. The formation of the ATG8-phosphatidylethanolamine conjugate is essential for autophagy and for the cytoplasm to vacuole transport (Cvt). The ATG8-PE conjugate mediates tethering between adjacent membranes and stimulates membrane hemifusion, leading to expansion of the autophagosomal membrane during autophagy (By similarity) (PubMed:30776962). Plays a role in appressorium formation and pathogenicity (PubMed:30776962).</text>
</comment>
<comment type="subunit">
    <text evidence="1 3">Monomer. Interacts with ATG8 through an intermediate thioester bond through the C-terminal Gly of ATG8 (By similarity) (PubMed:30776962). Also interacts with the 40 amino acid C-terminal region of the E1-like ATG7 enzyme. Also interacts with the ATG12-ATG5 conjugate (By similarity). Interacts with HAT1 (PubMed:30776962).</text>
</comment>
<comment type="subcellular location">
    <subcellularLocation>
        <location evidence="3">Preautophagosomal structure</location>
    </subcellularLocation>
    <subcellularLocation>
        <location evidence="1">Cytoplasm</location>
    </subcellularLocation>
</comment>
<comment type="domain">
    <text evidence="1">The N-terminal region is involved in phosphatidylethanolamine-binding and is required for ATG8-PE conjugation.</text>
</comment>
<comment type="domain">
    <text evidence="1">The flexible region (FR) is required for ATG7-binding.</text>
</comment>
<comment type="domain">
    <text evidence="1">The handle region (HR) contains the ATG8 interaction motif (AIM) and mediates binding to ATG8. It is crucial for the cytoplasm-to-vacuole targeting pathway.</text>
</comment>
<comment type="PTM">
    <text evidence="3">Acetylated by HAT1 at Lys-262 and Lys-267, which affects the interaction with ATG8 and prevents autophagy during both appressorium development and nutrient starvation.</text>
</comment>
<comment type="similarity">
    <text evidence="5">Belongs to the ATG3 family.</text>
</comment>
<reference key="1">
    <citation type="journal article" date="2005" name="Nature">
        <title>The genome sequence of the rice blast fungus Magnaporthe grisea.</title>
        <authorList>
            <person name="Dean R.A."/>
            <person name="Talbot N.J."/>
            <person name="Ebbole D.J."/>
            <person name="Farman M.L."/>
            <person name="Mitchell T.K."/>
            <person name="Orbach M.J."/>
            <person name="Thon M.R."/>
            <person name="Kulkarni R."/>
            <person name="Xu J.-R."/>
            <person name="Pan H."/>
            <person name="Read N.D."/>
            <person name="Lee Y.-H."/>
            <person name="Carbone I."/>
            <person name="Brown D."/>
            <person name="Oh Y.Y."/>
            <person name="Donofrio N."/>
            <person name="Jeong J.S."/>
            <person name="Soanes D.M."/>
            <person name="Djonovic S."/>
            <person name="Kolomiets E."/>
            <person name="Rehmeyer C."/>
            <person name="Li W."/>
            <person name="Harding M."/>
            <person name="Kim S."/>
            <person name="Lebrun M.-H."/>
            <person name="Bohnert H."/>
            <person name="Coughlan S."/>
            <person name="Butler J."/>
            <person name="Calvo S.E."/>
            <person name="Ma L.-J."/>
            <person name="Nicol R."/>
            <person name="Purcell S."/>
            <person name="Nusbaum C."/>
            <person name="Galagan J.E."/>
            <person name="Birren B.W."/>
        </authorList>
    </citation>
    <scope>NUCLEOTIDE SEQUENCE [LARGE SCALE GENOMIC DNA]</scope>
    <source>
        <strain>70-15 / ATCC MYA-4617 / FGSC 8958</strain>
    </source>
</reference>
<reference key="2">
    <citation type="journal article" date="2019" name="Autophagy">
        <title>Histone acetyltransferase MoHat1 acetylates autophagy-related proteins MoAtg3 and MoAtg9 to orchestrate functional appressorium formation and pathogenicity in Magnaporthe oryzae.</title>
        <authorList>
            <person name="Yin Z."/>
            <person name="Chen C."/>
            <person name="Yang J."/>
            <person name="Feng W."/>
            <person name="Liu X."/>
            <person name="Zuo R."/>
            <person name="Wang J."/>
            <person name="Yang L."/>
            <person name="Zhong K."/>
            <person name="Gao C."/>
            <person name="Zhang H."/>
            <person name="Zheng X."/>
            <person name="Wang P."/>
            <person name="Zhang Z."/>
        </authorList>
    </citation>
    <scope>FUNCTION</scope>
    <scope>INTERACTION WITH HAT1 AND ATG8</scope>
    <scope>SUBCELLULAR LOCATION</scope>
    <scope>ACETYLATION AT LYS-262 AND LYS-267</scope>
    <scope>MUTAGENESIS OF LYS-262 AND LYS-267</scope>
</reference>